<protein>
    <recommendedName>
        <fullName evidence="1">Small ribosomal subunit protein uS15</fullName>
    </recommendedName>
    <alternativeName>
        <fullName evidence="3">30S ribosomal protein S15</fullName>
    </alternativeName>
</protein>
<keyword id="KW-0002">3D-structure</keyword>
<keyword id="KW-1185">Reference proteome</keyword>
<keyword id="KW-0687">Ribonucleoprotein</keyword>
<keyword id="KW-0689">Ribosomal protein</keyword>
<keyword id="KW-0694">RNA-binding</keyword>
<keyword id="KW-0699">rRNA-binding</keyword>
<comment type="function">
    <text evidence="1">One of the primary rRNA binding proteins, it binds directly to 16S rRNA where it helps nucleate assembly of the platform of the 30S subunit by binding and bridging several RNA helices of the 16S rRNA.</text>
</comment>
<comment type="function">
    <text evidence="1">Forms an intersubunit bridge (bridge B4) with the 23S rRNA of the 50S subunit in the ribosome.</text>
</comment>
<comment type="subunit">
    <text evidence="1">Part of the 30S ribosomal subunit. Forms a bridge to the 50S subunit in the 70S ribosome, contacting the 23S rRNA.</text>
</comment>
<comment type="similarity">
    <text evidence="1">Belongs to the universal ribosomal protein uS15 family.</text>
</comment>
<accession>Q82ZJ1</accession>
<organism>
    <name type="scientific">Enterococcus faecalis (strain ATCC 700802 / V583)</name>
    <dbReference type="NCBI Taxonomy" id="226185"/>
    <lineage>
        <taxon>Bacteria</taxon>
        <taxon>Bacillati</taxon>
        <taxon>Bacillota</taxon>
        <taxon>Bacilli</taxon>
        <taxon>Lactobacillales</taxon>
        <taxon>Enterococcaceae</taxon>
        <taxon>Enterococcus</taxon>
    </lineage>
</organism>
<proteinExistence type="evidence at protein level"/>
<dbReference type="EMBL" id="AE016830">
    <property type="protein sequence ID" value="AAO82747.1"/>
    <property type="molecule type" value="Genomic_DNA"/>
</dbReference>
<dbReference type="RefSeq" id="NP_816677.1">
    <property type="nucleotide sequence ID" value="NC_004668.1"/>
</dbReference>
<dbReference type="RefSeq" id="WP_002354983.1">
    <property type="nucleotide sequence ID" value="NZ_KE136524.1"/>
</dbReference>
<dbReference type="PDB" id="6WUB">
    <property type="method" value="EM"/>
    <property type="resolution" value="3.20 A"/>
    <property type="chains" value="o=2-89"/>
</dbReference>
<dbReference type="PDB" id="7P7Q">
    <property type="method" value="EM"/>
    <property type="resolution" value="2.40 A"/>
    <property type="chains" value="p=1-89"/>
</dbReference>
<dbReference type="PDB" id="7P7R">
    <property type="method" value="EM"/>
    <property type="resolution" value="2.90 A"/>
    <property type="chains" value="p=1-89"/>
</dbReference>
<dbReference type="PDBsum" id="6WUB"/>
<dbReference type="PDBsum" id="7P7Q"/>
<dbReference type="PDBsum" id="7P7R"/>
<dbReference type="EMDB" id="EMD-13241"/>
<dbReference type="EMDB" id="EMD-13242"/>
<dbReference type="SMR" id="Q82ZJ1"/>
<dbReference type="STRING" id="226185.EF_3065"/>
<dbReference type="EnsemblBacteria" id="AAO82747">
    <property type="protein sequence ID" value="AAO82747"/>
    <property type="gene ID" value="EF_3065"/>
</dbReference>
<dbReference type="GeneID" id="60894954"/>
<dbReference type="KEGG" id="efa:EF3065"/>
<dbReference type="PATRIC" id="fig|226185.45.peg.506"/>
<dbReference type="eggNOG" id="COG0184">
    <property type="taxonomic scope" value="Bacteria"/>
</dbReference>
<dbReference type="HOGENOM" id="CLU_148518_0_0_9"/>
<dbReference type="Proteomes" id="UP000001415">
    <property type="component" value="Chromosome"/>
</dbReference>
<dbReference type="GO" id="GO:0022627">
    <property type="term" value="C:cytosolic small ribosomal subunit"/>
    <property type="evidence" value="ECO:0007669"/>
    <property type="project" value="TreeGrafter"/>
</dbReference>
<dbReference type="GO" id="GO:0019843">
    <property type="term" value="F:rRNA binding"/>
    <property type="evidence" value="ECO:0007669"/>
    <property type="project" value="UniProtKB-UniRule"/>
</dbReference>
<dbReference type="GO" id="GO:0003735">
    <property type="term" value="F:structural constituent of ribosome"/>
    <property type="evidence" value="ECO:0007669"/>
    <property type="project" value="InterPro"/>
</dbReference>
<dbReference type="GO" id="GO:0006412">
    <property type="term" value="P:translation"/>
    <property type="evidence" value="ECO:0007669"/>
    <property type="project" value="UniProtKB-UniRule"/>
</dbReference>
<dbReference type="CDD" id="cd00353">
    <property type="entry name" value="Ribosomal_S15p_S13e"/>
    <property type="match status" value="1"/>
</dbReference>
<dbReference type="FunFam" id="1.10.287.10:FF:000002">
    <property type="entry name" value="30S ribosomal protein S15"/>
    <property type="match status" value="1"/>
</dbReference>
<dbReference type="Gene3D" id="6.10.250.3130">
    <property type="match status" value="1"/>
</dbReference>
<dbReference type="Gene3D" id="1.10.287.10">
    <property type="entry name" value="S15/NS1, RNA-binding"/>
    <property type="match status" value="1"/>
</dbReference>
<dbReference type="HAMAP" id="MF_01343_B">
    <property type="entry name" value="Ribosomal_uS15_B"/>
    <property type="match status" value="1"/>
</dbReference>
<dbReference type="InterPro" id="IPR000589">
    <property type="entry name" value="Ribosomal_uS15"/>
</dbReference>
<dbReference type="InterPro" id="IPR005290">
    <property type="entry name" value="Ribosomal_uS15_bac-type"/>
</dbReference>
<dbReference type="InterPro" id="IPR009068">
    <property type="entry name" value="uS15_NS1_RNA-bd_sf"/>
</dbReference>
<dbReference type="NCBIfam" id="TIGR00952">
    <property type="entry name" value="S15_bact"/>
    <property type="match status" value="1"/>
</dbReference>
<dbReference type="PANTHER" id="PTHR23321">
    <property type="entry name" value="RIBOSOMAL PROTEIN S15, BACTERIAL AND ORGANELLAR"/>
    <property type="match status" value="1"/>
</dbReference>
<dbReference type="PANTHER" id="PTHR23321:SF26">
    <property type="entry name" value="SMALL RIBOSOMAL SUBUNIT PROTEIN US15M"/>
    <property type="match status" value="1"/>
</dbReference>
<dbReference type="Pfam" id="PF00312">
    <property type="entry name" value="Ribosomal_S15"/>
    <property type="match status" value="1"/>
</dbReference>
<dbReference type="SMART" id="SM01387">
    <property type="entry name" value="Ribosomal_S15"/>
    <property type="match status" value="1"/>
</dbReference>
<dbReference type="SUPFAM" id="SSF47060">
    <property type="entry name" value="S15/NS1 RNA-binding domain"/>
    <property type="match status" value="1"/>
</dbReference>
<feature type="chain" id="PRO_0000115435" description="Small ribosomal subunit protein uS15">
    <location>
        <begin position="1"/>
        <end position="89"/>
    </location>
</feature>
<feature type="region of interest" description="Disordered" evidence="2">
    <location>
        <begin position="1"/>
        <end position="24"/>
    </location>
</feature>
<feature type="compositionally biased region" description="Basic and acidic residues" evidence="2">
    <location>
        <begin position="1"/>
        <end position="21"/>
    </location>
</feature>
<feature type="helix" evidence="4">
    <location>
        <begin position="5"/>
        <end position="12"/>
    </location>
</feature>
<feature type="strand" evidence="4">
    <location>
        <begin position="13"/>
        <end position="15"/>
    </location>
</feature>
<feature type="strand" evidence="4">
    <location>
        <begin position="17"/>
        <end position="20"/>
    </location>
</feature>
<feature type="helix" evidence="4">
    <location>
        <begin position="25"/>
        <end position="45"/>
    </location>
</feature>
<feature type="helix" evidence="4">
    <location>
        <begin position="50"/>
        <end position="73"/>
    </location>
</feature>
<feature type="helix" evidence="4">
    <location>
        <begin position="75"/>
        <end position="85"/>
    </location>
</feature>
<evidence type="ECO:0000255" key="1">
    <source>
        <dbReference type="HAMAP-Rule" id="MF_01343"/>
    </source>
</evidence>
<evidence type="ECO:0000256" key="2">
    <source>
        <dbReference type="SAM" id="MobiDB-lite"/>
    </source>
</evidence>
<evidence type="ECO:0000305" key="3"/>
<evidence type="ECO:0007829" key="4">
    <source>
        <dbReference type="PDB" id="6WUB"/>
    </source>
</evidence>
<gene>
    <name evidence="1" type="primary">rpsO</name>
    <name type="ordered locus">EF_3065</name>
</gene>
<name>RS15_ENTFA</name>
<reference key="1">
    <citation type="journal article" date="2003" name="Science">
        <title>Role of mobile DNA in the evolution of vancomycin-resistant Enterococcus faecalis.</title>
        <authorList>
            <person name="Paulsen I.T."/>
            <person name="Banerjei L."/>
            <person name="Myers G.S.A."/>
            <person name="Nelson K.E."/>
            <person name="Seshadri R."/>
            <person name="Read T.D."/>
            <person name="Fouts D.E."/>
            <person name="Eisen J.A."/>
            <person name="Gill S.R."/>
            <person name="Heidelberg J.F."/>
            <person name="Tettelin H."/>
            <person name="Dodson R.J."/>
            <person name="Umayam L.A."/>
            <person name="Brinkac L.M."/>
            <person name="Beanan M.J."/>
            <person name="Daugherty S.C."/>
            <person name="DeBoy R.T."/>
            <person name="Durkin S.A."/>
            <person name="Kolonay J.F."/>
            <person name="Madupu R."/>
            <person name="Nelson W.C."/>
            <person name="Vamathevan J.J."/>
            <person name="Tran B."/>
            <person name="Upton J."/>
            <person name="Hansen T."/>
            <person name="Shetty J."/>
            <person name="Khouri H.M."/>
            <person name="Utterback T.R."/>
            <person name="Radune D."/>
            <person name="Ketchum K.A."/>
            <person name="Dougherty B.A."/>
            <person name="Fraser C.M."/>
        </authorList>
    </citation>
    <scope>NUCLEOTIDE SEQUENCE [LARGE SCALE GENOMIC DNA]</scope>
    <source>
        <strain>ATCC 700802 / V583</strain>
    </source>
</reference>
<sequence>MAISQERKNEIIKEYARHEGDTGSPEVQIAVLTEDINQLNEHARTHKKDHHSYRGLMKKIGHRRNLLAYLRKTDIQRYRELIQRLGLRR</sequence>